<evidence type="ECO:0000255" key="1">
    <source>
        <dbReference type="HAMAP-Rule" id="MF_00023"/>
    </source>
</evidence>
<comment type="function">
    <text evidence="1">Required for rescue of stalled ribosomes mediated by trans-translation. Binds to transfer-messenger RNA (tmRNA), required for stable association of tmRNA with ribosomes. tmRNA and SmpB together mimic tRNA shape, replacing the anticodon stem-loop with SmpB. tmRNA is encoded by the ssrA gene; the 2 termini fold to resemble tRNA(Ala) and it encodes a 'tag peptide', a short internal open reading frame. During trans-translation Ala-aminoacylated tmRNA acts like a tRNA, entering the A-site of stalled ribosomes, displacing the stalled mRNA. The ribosome then switches to translate the ORF on the tmRNA; the nascent peptide is terminated with the 'tag peptide' encoded by the tmRNA and targeted for degradation. The ribosome is freed to recommence translation, which seems to be the essential function of trans-translation.</text>
</comment>
<comment type="subcellular location">
    <subcellularLocation>
        <location evidence="1">Cytoplasm</location>
    </subcellularLocation>
    <text evidence="1">The tmRNA-SmpB complex associates with stalled 70S ribosomes.</text>
</comment>
<comment type="similarity">
    <text evidence="1">Belongs to the SmpB family.</text>
</comment>
<sequence length="154" mass="18138">MAKEKERIKVVSDNRQARFLYEILETYEAGIELQGTEVKSIRAGKVNLRDGFALLRDGEVWLMNVHISPYDKSSLFFNHDPRRTRRLLMHNWEIRKLIGQVEQKGLTLVPLKMYFKGSWVKVALGLGKGKKLHDKRETLKRRQDDRDMARAMKR</sequence>
<accession>P74355</accession>
<proteinExistence type="inferred from homology"/>
<organism>
    <name type="scientific">Synechocystis sp. (strain ATCC 27184 / PCC 6803 / Kazusa)</name>
    <dbReference type="NCBI Taxonomy" id="1111708"/>
    <lineage>
        <taxon>Bacteria</taxon>
        <taxon>Bacillati</taxon>
        <taxon>Cyanobacteriota</taxon>
        <taxon>Cyanophyceae</taxon>
        <taxon>Synechococcales</taxon>
        <taxon>Merismopediaceae</taxon>
        <taxon>Synechocystis</taxon>
    </lineage>
</organism>
<feature type="chain" id="PRO_0000103053" description="SsrA-binding protein">
    <location>
        <begin position="1"/>
        <end position="154"/>
    </location>
</feature>
<protein>
    <recommendedName>
        <fullName evidence="1">SsrA-binding protein</fullName>
    </recommendedName>
    <alternativeName>
        <fullName evidence="1">Small protein B</fullName>
    </alternativeName>
</protein>
<gene>
    <name evidence="1" type="primary">smpB</name>
    <name type="ordered locus">slr1639</name>
</gene>
<name>SSRP_SYNY3</name>
<reference key="1">
    <citation type="journal article" date="1996" name="DNA Res.">
        <title>Sequence analysis of the genome of the unicellular cyanobacterium Synechocystis sp. strain PCC6803. II. Sequence determination of the entire genome and assignment of potential protein-coding regions.</title>
        <authorList>
            <person name="Kaneko T."/>
            <person name="Sato S."/>
            <person name="Kotani H."/>
            <person name="Tanaka A."/>
            <person name="Asamizu E."/>
            <person name="Nakamura Y."/>
            <person name="Miyajima N."/>
            <person name="Hirosawa M."/>
            <person name="Sugiura M."/>
            <person name="Sasamoto S."/>
            <person name="Kimura T."/>
            <person name="Hosouchi T."/>
            <person name="Matsuno A."/>
            <person name="Muraki A."/>
            <person name="Nakazaki N."/>
            <person name="Naruo K."/>
            <person name="Okumura S."/>
            <person name="Shimpo S."/>
            <person name="Takeuchi C."/>
            <person name="Wada T."/>
            <person name="Watanabe A."/>
            <person name="Yamada M."/>
            <person name="Yasuda M."/>
            <person name="Tabata S."/>
        </authorList>
    </citation>
    <scope>NUCLEOTIDE SEQUENCE [LARGE SCALE GENOMIC DNA]</scope>
    <source>
        <strain>ATCC 27184 / PCC 6803 / Kazusa</strain>
    </source>
</reference>
<dbReference type="EMBL" id="BA000022">
    <property type="protein sequence ID" value="BAA18450.1"/>
    <property type="molecule type" value="Genomic_DNA"/>
</dbReference>
<dbReference type="PIR" id="S76191">
    <property type="entry name" value="S76191"/>
</dbReference>
<dbReference type="SMR" id="P74355"/>
<dbReference type="FunCoup" id="P74355">
    <property type="interactions" value="325"/>
</dbReference>
<dbReference type="STRING" id="1148.gene:10499327"/>
<dbReference type="PaxDb" id="1148-1653537"/>
<dbReference type="EnsemblBacteria" id="BAA18450">
    <property type="protein sequence ID" value="BAA18450"/>
    <property type="gene ID" value="BAA18450"/>
</dbReference>
<dbReference type="KEGG" id="syn:slr1639"/>
<dbReference type="eggNOG" id="COG0691">
    <property type="taxonomic scope" value="Bacteria"/>
</dbReference>
<dbReference type="InParanoid" id="P74355"/>
<dbReference type="PhylomeDB" id="P74355"/>
<dbReference type="Proteomes" id="UP000001425">
    <property type="component" value="Chromosome"/>
</dbReference>
<dbReference type="GO" id="GO:0005829">
    <property type="term" value="C:cytosol"/>
    <property type="evidence" value="ECO:0000318"/>
    <property type="project" value="GO_Central"/>
</dbReference>
<dbReference type="GO" id="GO:0003723">
    <property type="term" value="F:RNA binding"/>
    <property type="evidence" value="ECO:0000318"/>
    <property type="project" value="GO_Central"/>
</dbReference>
<dbReference type="GO" id="GO:0070929">
    <property type="term" value="P:trans-translation"/>
    <property type="evidence" value="ECO:0007669"/>
    <property type="project" value="UniProtKB-UniRule"/>
</dbReference>
<dbReference type="CDD" id="cd09294">
    <property type="entry name" value="SmpB"/>
    <property type="match status" value="1"/>
</dbReference>
<dbReference type="Gene3D" id="2.40.280.10">
    <property type="match status" value="1"/>
</dbReference>
<dbReference type="HAMAP" id="MF_00023">
    <property type="entry name" value="SmpB"/>
    <property type="match status" value="1"/>
</dbReference>
<dbReference type="InterPro" id="IPR023620">
    <property type="entry name" value="SmpB"/>
</dbReference>
<dbReference type="InterPro" id="IPR000037">
    <property type="entry name" value="SsrA-bd_prot"/>
</dbReference>
<dbReference type="InterPro" id="IPR020081">
    <property type="entry name" value="SsrA-bd_prot_CS"/>
</dbReference>
<dbReference type="NCBIfam" id="NF003843">
    <property type="entry name" value="PRK05422.1"/>
    <property type="match status" value="1"/>
</dbReference>
<dbReference type="NCBIfam" id="TIGR00086">
    <property type="entry name" value="smpB"/>
    <property type="match status" value="1"/>
</dbReference>
<dbReference type="PANTHER" id="PTHR30308:SF2">
    <property type="entry name" value="SSRA-BINDING PROTEIN"/>
    <property type="match status" value="1"/>
</dbReference>
<dbReference type="PANTHER" id="PTHR30308">
    <property type="entry name" value="TMRNA-BINDING COMPONENT OF TRANS-TRANSLATION TAGGING COMPLEX"/>
    <property type="match status" value="1"/>
</dbReference>
<dbReference type="Pfam" id="PF01668">
    <property type="entry name" value="SmpB"/>
    <property type="match status" value="1"/>
</dbReference>
<dbReference type="SUPFAM" id="SSF74982">
    <property type="entry name" value="Small protein B (SmpB)"/>
    <property type="match status" value="1"/>
</dbReference>
<dbReference type="PROSITE" id="PS01317">
    <property type="entry name" value="SSRP"/>
    <property type="match status" value="1"/>
</dbReference>
<keyword id="KW-0963">Cytoplasm</keyword>
<keyword id="KW-1185">Reference proteome</keyword>
<keyword id="KW-0694">RNA-binding</keyword>